<gene>
    <name evidence="1" type="primary">ribH</name>
    <name type="ordered locus">WS0295</name>
</gene>
<proteinExistence type="inferred from homology"/>
<keyword id="KW-1185">Reference proteome</keyword>
<keyword id="KW-0686">Riboflavin biosynthesis</keyword>
<keyword id="KW-0808">Transferase</keyword>
<reference key="1">
    <citation type="journal article" date="2003" name="Proc. Natl. Acad. Sci. U.S.A.">
        <title>Complete genome sequence and analysis of Wolinella succinogenes.</title>
        <authorList>
            <person name="Baar C."/>
            <person name="Eppinger M."/>
            <person name="Raddatz G."/>
            <person name="Simon J."/>
            <person name="Lanz C."/>
            <person name="Klimmek O."/>
            <person name="Nandakumar R."/>
            <person name="Gross R."/>
            <person name="Rosinus A."/>
            <person name="Keller H."/>
            <person name="Jagtap P."/>
            <person name="Linke B."/>
            <person name="Meyer F."/>
            <person name="Lederer H."/>
            <person name="Schuster S.C."/>
        </authorList>
    </citation>
    <scope>NUCLEOTIDE SEQUENCE [LARGE SCALE GENOMIC DNA]</scope>
    <source>
        <strain>ATCC 29543 / DSM 1740 / CCUG 13145 / JCM 31913 / LMG 7466 / NCTC 11488 / FDC 602W</strain>
    </source>
</reference>
<evidence type="ECO:0000255" key="1">
    <source>
        <dbReference type="HAMAP-Rule" id="MF_00178"/>
    </source>
</evidence>
<comment type="function">
    <text evidence="1">Catalyzes the formation of 6,7-dimethyl-8-ribityllumazine by condensation of 5-amino-6-(D-ribitylamino)uracil with 3,4-dihydroxy-2-butanone 4-phosphate. This is the penultimate step in the biosynthesis of riboflavin.</text>
</comment>
<comment type="catalytic activity">
    <reaction evidence="1">
        <text>(2S)-2-hydroxy-3-oxobutyl phosphate + 5-amino-6-(D-ribitylamino)uracil = 6,7-dimethyl-8-(1-D-ribityl)lumazine + phosphate + 2 H2O + H(+)</text>
        <dbReference type="Rhea" id="RHEA:26152"/>
        <dbReference type="ChEBI" id="CHEBI:15377"/>
        <dbReference type="ChEBI" id="CHEBI:15378"/>
        <dbReference type="ChEBI" id="CHEBI:15934"/>
        <dbReference type="ChEBI" id="CHEBI:43474"/>
        <dbReference type="ChEBI" id="CHEBI:58201"/>
        <dbReference type="ChEBI" id="CHEBI:58830"/>
        <dbReference type="EC" id="2.5.1.78"/>
    </reaction>
</comment>
<comment type="pathway">
    <text evidence="1">Cofactor biosynthesis; riboflavin biosynthesis; riboflavin from 2-hydroxy-3-oxobutyl phosphate and 5-amino-6-(D-ribitylamino)uracil: step 1/2.</text>
</comment>
<comment type="similarity">
    <text evidence="1">Belongs to the DMRL synthase family.</text>
</comment>
<feature type="chain" id="PRO_0000134833" description="6,7-dimethyl-8-ribityllumazine synthase">
    <location>
        <begin position="1"/>
        <end position="156"/>
    </location>
</feature>
<feature type="active site" description="Proton donor" evidence="1">
    <location>
        <position position="89"/>
    </location>
</feature>
<feature type="binding site" evidence="1">
    <location>
        <position position="23"/>
    </location>
    <ligand>
        <name>5-amino-6-(D-ribitylamino)uracil</name>
        <dbReference type="ChEBI" id="CHEBI:15934"/>
    </ligand>
</feature>
<feature type="binding site" evidence="1">
    <location>
        <begin position="57"/>
        <end position="59"/>
    </location>
    <ligand>
        <name>5-amino-6-(D-ribitylamino)uracil</name>
        <dbReference type="ChEBI" id="CHEBI:15934"/>
    </ligand>
</feature>
<feature type="binding site" evidence="1">
    <location>
        <begin position="81"/>
        <end position="83"/>
    </location>
    <ligand>
        <name>5-amino-6-(D-ribitylamino)uracil</name>
        <dbReference type="ChEBI" id="CHEBI:15934"/>
    </ligand>
</feature>
<feature type="binding site" evidence="1">
    <location>
        <begin position="86"/>
        <end position="87"/>
    </location>
    <ligand>
        <name>(2S)-2-hydroxy-3-oxobutyl phosphate</name>
        <dbReference type="ChEBI" id="CHEBI:58830"/>
    </ligand>
</feature>
<feature type="binding site" evidence="1">
    <location>
        <position position="114"/>
    </location>
    <ligand>
        <name>5-amino-6-(D-ribitylamino)uracil</name>
        <dbReference type="ChEBI" id="CHEBI:15934"/>
    </ligand>
</feature>
<feature type="binding site" evidence="1">
    <location>
        <position position="128"/>
    </location>
    <ligand>
        <name>(2S)-2-hydroxy-3-oxobutyl phosphate</name>
        <dbReference type="ChEBI" id="CHEBI:58830"/>
    </ligand>
</feature>
<name>RISB_WOLSU</name>
<sequence length="156" mass="16769">MNVIEGKLNLTGNERVAVIASRFNHLITDRLVEGARDSFVRHGGKDEHLDLILVPGAFELPFALEKVLAQGDYDGVCCLGAIIRGSTPHFDYVSAEATKGIANVTLKYGAAVTFGVLTTDNIEQAIERAGTKVGNKGFEAMTGLIEMMNLYKNIGA</sequence>
<protein>
    <recommendedName>
        <fullName evidence="1">6,7-dimethyl-8-ribityllumazine synthase</fullName>
        <shortName evidence="1">DMRL synthase</shortName>
        <shortName evidence="1">LS</shortName>
        <shortName evidence="1">Lumazine synthase</shortName>
        <ecNumber evidence="1">2.5.1.78</ecNumber>
    </recommendedName>
</protein>
<dbReference type="EC" id="2.5.1.78" evidence="1"/>
<dbReference type="EMBL" id="BX571657">
    <property type="protein sequence ID" value="CAE09446.1"/>
    <property type="molecule type" value="Genomic_DNA"/>
</dbReference>
<dbReference type="RefSeq" id="WP_011138247.1">
    <property type="nucleotide sequence ID" value="NC_005090.1"/>
</dbReference>
<dbReference type="SMR" id="Q7MAF0"/>
<dbReference type="STRING" id="273121.WS0295"/>
<dbReference type="KEGG" id="wsu:WS0295"/>
<dbReference type="eggNOG" id="COG0054">
    <property type="taxonomic scope" value="Bacteria"/>
</dbReference>
<dbReference type="HOGENOM" id="CLU_089358_1_1_7"/>
<dbReference type="UniPathway" id="UPA00275">
    <property type="reaction ID" value="UER00404"/>
</dbReference>
<dbReference type="Proteomes" id="UP000000422">
    <property type="component" value="Chromosome"/>
</dbReference>
<dbReference type="GO" id="GO:0005829">
    <property type="term" value="C:cytosol"/>
    <property type="evidence" value="ECO:0007669"/>
    <property type="project" value="TreeGrafter"/>
</dbReference>
<dbReference type="GO" id="GO:0009349">
    <property type="term" value="C:riboflavin synthase complex"/>
    <property type="evidence" value="ECO:0007669"/>
    <property type="project" value="InterPro"/>
</dbReference>
<dbReference type="GO" id="GO:0000906">
    <property type="term" value="F:6,7-dimethyl-8-ribityllumazine synthase activity"/>
    <property type="evidence" value="ECO:0007669"/>
    <property type="project" value="UniProtKB-UniRule"/>
</dbReference>
<dbReference type="GO" id="GO:0009231">
    <property type="term" value="P:riboflavin biosynthetic process"/>
    <property type="evidence" value="ECO:0007669"/>
    <property type="project" value="UniProtKB-UniRule"/>
</dbReference>
<dbReference type="CDD" id="cd09209">
    <property type="entry name" value="Lumazine_synthase-I"/>
    <property type="match status" value="1"/>
</dbReference>
<dbReference type="FunFam" id="3.40.50.960:FF:000001">
    <property type="entry name" value="6,7-dimethyl-8-ribityllumazine synthase"/>
    <property type="match status" value="1"/>
</dbReference>
<dbReference type="Gene3D" id="3.40.50.960">
    <property type="entry name" value="Lumazine/riboflavin synthase"/>
    <property type="match status" value="1"/>
</dbReference>
<dbReference type="HAMAP" id="MF_00178">
    <property type="entry name" value="Lumazine_synth"/>
    <property type="match status" value="1"/>
</dbReference>
<dbReference type="InterPro" id="IPR034964">
    <property type="entry name" value="LS"/>
</dbReference>
<dbReference type="InterPro" id="IPR002180">
    <property type="entry name" value="LS/RS"/>
</dbReference>
<dbReference type="InterPro" id="IPR036467">
    <property type="entry name" value="LS/RS_sf"/>
</dbReference>
<dbReference type="NCBIfam" id="TIGR00114">
    <property type="entry name" value="lumazine-synth"/>
    <property type="match status" value="1"/>
</dbReference>
<dbReference type="PANTHER" id="PTHR21058:SF0">
    <property type="entry name" value="6,7-DIMETHYL-8-RIBITYLLUMAZINE SYNTHASE"/>
    <property type="match status" value="1"/>
</dbReference>
<dbReference type="PANTHER" id="PTHR21058">
    <property type="entry name" value="6,7-DIMETHYL-8-RIBITYLLUMAZINE SYNTHASE DMRL SYNTHASE LUMAZINE SYNTHASE"/>
    <property type="match status" value="1"/>
</dbReference>
<dbReference type="Pfam" id="PF00885">
    <property type="entry name" value="DMRL_synthase"/>
    <property type="match status" value="1"/>
</dbReference>
<dbReference type="SUPFAM" id="SSF52121">
    <property type="entry name" value="Lumazine synthase"/>
    <property type="match status" value="1"/>
</dbReference>
<organism>
    <name type="scientific">Wolinella succinogenes (strain ATCC 29543 / DSM 1740 / CCUG 13145 / JCM 31913 / LMG 7466 / NCTC 11488 / FDC 602W)</name>
    <name type="common">Vibrio succinogenes</name>
    <dbReference type="NCBI Taxonomy" id="273121"/>
    <lineage>
        <taxon>Bacteria</taxon>
        <taxon>Pseudomonadati</taxon>
        <taxon>Campylobacterota</taxon>
        <taxon>Epsilonproteobacteria</taxon>
        <taxon>Campylobacterales</taxon>
        <taxon>Helicobacteraceae</taxon>
        <taxon>Wolinella</taxon>
    </lineage>
</organism>
<accession>Q7MAF0</accession>